<organism>
    <name type="scientific">Procavia capensis habessinica</name>
    <name type="common">Abyssinian hyrax</name>
    <dbReference type="NCBI Taxonomy" id="9814"/>
    <lineage>
        <taxon>Eukaryota</taxon>
        <taxon>Metazoa</taxon>
        <taxon>Chordata</taxon>
        <taxon>Craniata</taxon>
        <taxon>Vertebrata</taxon>
        <taxon>Euteleostomi</taxon>
        <taxon>Mammalia</taxon>
        <taxon>Eutheria</taxon>
        <taxon>Afrotheria</taxon>
        <taxon>Hyracoidea</taxon>
        <taxon>Procaviidae</taxon>
        <taxon>Procavia</taxon>
    </lineage>
</organism>
<proteinExistence type="inferred from homology"/>
<protein>
    <recommendedName>
        <fullName>Alpha-2B adrenergic receptor</fullName>
    </recommendedName>
    <alternativeName>
        <fullName>Alpha-2B adrenoreceptor</fullName>
        <shortName>Alpha-2B adrenoceptor</shortName>
        <shortName>Alpha-2BAR</shortName>
    </alternativeName>
</protein>
<evidence type="ECO:0000250" key="1"/>
<evidence type="ECO:0000250" key="2">
    <source>
        <dbReference type="UniProtKB" id="P18089"/>
    </source>
</evidence>
<evidence type="ECO:0000255" key="3">
    <source>
        <dbReference type="PROSITE-ProRule" id="PRU00521"/>
    </source>
</evidence>
<evidence type="ECO:0000256" key="4">
    <source>
        <dbReference type="SAM" id="MobiDB-lite"/>
    </source>
</evidence>
<reference key="1">
    <citation type="journal article" date="1997" name="Nature">
        <title>Endemic African mammals shake the phylogenetic tree.</title>
        <authorList>
            <person name="Springer M.S."/>
            <person name="Cleven G.C."/>
            <person name="Madsen O.J."/>
            <person name="de Jong W.W."/>
            <person name="Waddell V.G."/>
            <person name="Amrine H.M."/>
            <person name="Stanhope M.J."/>
        </authorList>
    </citation>
    <scope>NUCLEOTIDE SEQUENCE [GENOMIC DNA]</scope>
</reference>
<keyword id="KW-1003">Cell membrane</keyword>
<keyword id="KW-1015">Disulfide bond</keyword>
<keyword id="KW-0297">G-protein coupled receptor</keyword>
<keyword id="KW-0449">Lipoprotein</keyword>
<keyword id="KW-0472">Membrane</keyword>
<keyword id="KW-0564">Palmitate</keyword>
<keyword id="KW-0675">Receptor</keyword>
<keyword id="KW-0807">Transducer</keyword>
<keyword id="KW-0812">Transmembrane</keyword>
<keyword id="KW-1133">Transmembrane helix</keyword>
<dbReference type="EMBL" id="Y12523">
    <property type="protein sequence ID" value="CAA73123.1"/>
    <property type="molecule type" value="Genomic_DNA"/>
</dbReference>
<dbReference type="SMR" id="O19054"/>
<dbReference type="GO" id="GO:0005886">
    <property type="term" value="C:plasma membrane"/>
    <property type="evidence" value="ECO:0007669"/>
    <property type="project" value="UniProtKB-SubCell"/>
</dbReference>
<dbReference type="GO" id="GO:0004938">
    <property type="term" value="F:alpha2-adrenergic receptor activity"/>
    <property type="evidence" value="ECO:0007669"/>
    <property type="project" value="InterPro"/>
</dbReference>
<dbReference type="GO" id="GO:0051379">
    <property type="term" value="F:epinephrine binding"/>
    <property type="evidence" value="ECO:0007669"/>
    <property type="project" value="TreeGrafter"/>
</dbReference>
<dbReference type="GO" id="GO:0030168">
    <property type="term" value="P:platelet activation"/>
    <property type="evidence" value="ECO:0007669"/>
    <property type="project" value="InterPro"/>
</dbReference>
<dbReference type="GO" id="GO:0006940">
    <property type="term" value="P:regulation of smooth muscle contraction"/>
    <property type="evidence" value="ECO:0007669"/>
    <property type="project" value="InterPro"/>
</dbReference>
<dbReference type="GO" id="GO:0019229">
    <property type="term" value="P:regulation of vasoconstriction"/>
    <property type="evidence" value="ECO:0007669"/>
    <property type="project" value="InterPro"/>
</dbReference>
<dbReference type="CDD" id="cd15321">
    <property type="entry name" value="7tmA_alpha2B_AR"/>
    <property type="match status" value="1"/>
</dbReference>
<dbReference type="FunFam" id="1.20.1070.10:FF:000330">
    <property type="entry name" value="Alpha 2B adrenergic receptor"/>
    <property type="match status" value="1"/>
</dbReference>
<dbReference type="FunFam" id="1.20.1070.10:FF:000185">
    <property type="entry name" value="Alpha-2B adrenergic receptor"/>
    <property type="match status" value="1"/>
</dbReference>
<dbReference type="Gene3D" id="1.20.1070.10">
    <property type="entry name" value="Rhodopsin 7-helix transmembrane proteins"/>
    <property type="match status" value="2"/>
</dbReference>
<dbReference type="InterPro" id="IPR002233">
    <property type="entry name" value="ADR_fam"/>
</dbReference>
<dbReference type="InterPro" id="IPR000207">
    <property type="entry name" value="ADRA2B_rcpt"/>
</dbReference>
<dbReference type="InterPro" id="IPR000276">
    <property type="entry name" value="GPCR_Rhodpsn"/>
</dbReference>
<dbReference type="InterPro" id="IPR017452">
    <property type="entry name" value="GPCR_Rhodpsn_7TM"/>
</dbReference>
<dbReference type="PANTHER" id="PTHR24248">
    <property type="entry name" value="ADRENERGIC RECEPTOR-RELATED G-PROTEIN COUPLED RECEPTOR"/>
    <property type="match status" value="1"/>
</dbReference>
<dbReference type="PANTHER" id="PTHR24248:SF130">
    <property type="entry name" value="ALPHA-2B ADRENERGIC RECEPTOR"/>
    <property type="match status" value="1"/>
</dbReference>
<dbReference type="Pfam" id="PF00001">
    <property type="entry name" value="7tm_1"/>
    <property type="match status" value="1"/>
</dbReference>
<dbReference type="PRINTS" id="PR01103">
    <property type="entry name" value="ADRENERGICR"/>
</dbReference>
<dbReference type="PRINTS" id="PR00559">
    <property type="entry name" value="ADRENRGCA2BR"/>
</dbReference>
<dbReference type="PRINTS" id="PR00237">
    <property type="entry name" value="GPCRRHODOPSN"/>
</dbReference>
<dbReference type="SUPFAM" id="SSF81321">
    <property type="entry name" value="Family A G protein-coupled receptor-like"/>
    <property type="match status" value="1"/>
</dbReference>
<dbReference type="PROSITE" id="PS00237">
    <property type="entry name" value="G_PROTEIN_RECEP_F1_1"/>
    <property type="match status" value="1"/>
</dbReference>
<dbReference type="PROSITE" id="PS50262">
    <property type="entry name" value="G_PROTEIN_RECEP_F1_2"/>
    <property type="match status" value="1"/>
</dbReference>
<gene>
    <name type="primary">ADRA2B</name>
</gene>
<feature type="chain" id="PRO_0000069098" description="Alpha-2B adrenergic receptor">
    <location>
        <begin position="1" status="less than"/>
        <end position="389" status="greater than"/>
    </location>
</feature>
<feature type="transmembrane region" description="Helical; Name=1" evidence="1">
    <location>
        <begin position="1" status="less than"/>
        <end position="25"/>
    </location>
</feature>
<feature type="topological domain" description="Cytoplasmic" evidence="1">
    <location>
        <begin position="26"/>
        <end position="36"/>
    </location>
</feature>
<feature type="transmembrane region" description="Helical; Name=2" evidence="1">
    <location>
        <begin position="37"/>
        <end position="62"/>
    </location>
</feature>
<feature type="topological domain" description="Extracellular" evidence="1">
    <location>
        <begin position="63"/>
        <end position="72"/>
    </location>
</feature>
<feature type="transmembrane region" description="Helical; Name=3" evidence="1">
    <location>
        <begin position="73"/>
        <end position="95"/>
    </location>
</feature>
<feature type="topological domain" description="Cytoplasmic" evidence="1">
    <location>
        <begin position="96"/>
        <end position="117"/>
    </location>
</feature>
<feature type="transmembrane region" description="Helical; Name=4" evidence="1">
    <location>
        <begin position="118"/>
        <end position="140"/>
    </location>
</feature>
<feature type="topological domain" description="Extracellular" evidence="1">
    <location>
        <begin position="141"/>
        <end position="156"/>
    </location>
</feature>
<feature type="transmembrane region" description="Helical; Name=5" evidence="1">
    <location>
        <begin position="157"/>
        <end position="180"/>
    </location>
</feature>
<feature type="topological domain" description="Cytoplasmic" evidence="1">
    <location>
        <begin position="181"/>
        <end position="353"/>
    </location>
</feature>
<feature type="transmembrane region" description="Helical; Name=6" evidence="1">
    <location>
        <begin position="354"/>
        <end position="377"/>
    </location>
</feature>
<feature type="topological domain" description="Extracellular" evidence="1">
    <location>
        <begin position="378"/>
        <end position="386"/>
    </location>
</feature>
<feature type="transmembrane region" description="Helical; Name=7" evidence="1">
    <location>
        <begin position="387"/>
        <end position="389" status="greater than"/>
    </location>
</feature>
<feature type="region of interest" description="Disordered" evidence="4">
    <location>
        <begin position="192"/>
        <end position="218"/>
    </location>
</feature>
<feature type="region of interest" description="Disordered" evidence="4">
    <location>
        <begin position="231"/>
        <end position="310"/>
    </location>
</feature>
<feature type="compositionally biased region" description="Basic and acidic residues" evidence="4">
    <location>
        <begin position="234"/>
        <end position="249"/>
    </location>
</feature>
<feature type="site" description="Implicated in ligand binding" evidence="1">
    <location>
        <position position="79"/>
    </location>
</feature>
<feature type="site" description="Implicated in catechol agonist binding" evidence="1">
    <location>
        <position position="163"/>
    </location>
</feature>
<feature type="site" description="Implicated in catechol agonist binding" evidence="1">
    <location>
        <position position="167"/>
    </location>
</feature>
<feature type="disulfide bond" evidence="3">
    <location>
        <begin position="72"/>
        <end position="151"/>
    </location>
</feature>
<feature type="non-terminal residue">
    <location>
        <position position="1"/>
    </location>
</feature>
<feature type="non-terminal residue">
    <location>
        <position position="389"/>
    </location>
</feature>
<sequence>AIAAVITFLILFTIFGNALVILAVLTSRSLRAPQNLFLVSLAAADILVATLIIPFSLANELLGYWYFWRTWCEVYLALDVLFCTSSIVHLCAISLDRYWAVSRALEYNSKRTPRRIKCIILTVWLIAAAISLPPLIYKGDQGPQPRGRPQCMLNQEAWYILSSSIGSFFAPCLIMILVYLRIYLIAKRSNRRGPRAKGAPGEGESKQPHPLTAGPLALANPPTLATSLAVDGEANGHSKLTGEKERETSEDPGTPTLQRSWPVLPSSGQSQKKGVCGASPEEEAEGEEEGSRPLSVPASPASACGPHLQQPQGSQVLATLRGQVLLGRGVGAAGGQWWRRRAQLTREKRFTFVLTVVIGVFVLCWFPFFFSYSLGAICPQHCKVPHGLF</sequence>
<comment type="function">
    <text>Alpha-2 adrenergic receptors mediate the catecholamine-induced inhibition of adenylate cyclase through the action of G proteins.</text>
</comment>
<comment type="subunit">
    <text evidence="2">Interacts with RAB26. Interacts with PPP1R9B.</text>
</comment>
<comment type="subcellular location">
    <subcellularLocation>
        <location>Cell membrane</location>
        <topology>Multi-pass membrane protein</topology>
    </subcellularLocation>
</comment>
<comment type="similarity">
    <text evidence="3">Belongs to the G-protein coupled receptor 1 family. Adrenergic receptor subfamily. ADRA2B sub-subfamily.</text>
</comment>
<accession>O19054</accession>
<name>ADA2B_PROHA</name>